<evidence type="ECO:0000250" key="1">
    <source>
        <dbReference type="UniProtKB" id="Q8VYJ2"/>
    </source>
</evidence>
<evidence type="ECO:0000255" key="2">
    <source>
        <dbReference type="PROSITE-ProRule" id="PRU01078"/>
    </source>
</evidence>
<evidence type="ECO:0000256" key="3">
    <source>
        <dbReference type="SAM" id="MobiDB-lite"/>
    </source>
</evidence>
<evidence type="ECO:0000269" key="4">
    <source>
    </source>
</evidence>
<evidence type="ECO:0000303" key="5">
    <source>
    </source>
</evidence>
<evidence type="ECO:0000305" key="6"/>
<evidence type="ECO:0000312" key="7">
    <source>
        <dbReference type="Araport" id="AT1G14490"/>
    </source>
</evidence>
<evidence type="ECO:0000312" key="8">
    <source>
        <dbReference type="EMBL" id="AAF43950.1"/>
    </source>
</evidence>
<evidence type="ECO:0000312" key="9">
    <source>
        <dbReference type="EMBL" id="FAA00299.1"/>
    </source>
</evidence>
<sequence length="206" mass="21459">METVGRPRGRPRGSKNKPKAPIFVTIDPPMSPYILEVPSGNDVVEALNRFCRGKAIGFCVLSGSGSVADVTLRQPSPAAPGSTITFHGKFDLLSVSATFLPPLPPTSLSPPVSNFFTVSLAGPQGKVIGGFVAGPLVAAGTVYFVATSFKNPSYHRLPATEEEQRNSAEGEEEGQSPPVSGGGGESMYVGGSDVIWDPNAKAPSPY</sequence>
<dbReference type="EMBL" id="AC012188">
    <property type="protein sequence ID" value="AAF43950.1"/>
    <property type="molecule type" value="Genomic_DNA"/>
</dbReference>
<dbReference type="EMBL" id="CP002684">
    <property type="protein sequence ID" value="AEE29171.1"/>
    <property type="molecule type" value="Genomic_DNA"/>
</dbReference>
<dbReference type="EMBL" id="BT029503">
    <property type="protein sequence ID" value="ABL66759.1"/>
    <property type="molecule type" value="mRNA"/>
</dbReference>
<dbReference type="EMBL" id="AB493457">
    <property type="protein sequence ID" value="BAH30295.1"/>
    <property type="molecule type" value="Genomic_DNA"/>
</dbReference>
<dbReference type="EMBL" id="BR000364">
    <property type="protein sequence ID" value="FAA00299.1"/>
    <property type="molecule type" value="mRNA"/>
</dbReference>
<dbReference type="PIR" id="G86279">
    <property type="entry name" value="G86279"/>
</dbReference>
<dbReference type="RefSeq" id="NP_172901.1">
    <property type="nucleotide sequence ID" value="NM_101316.3"/>
</dbReference>
<dbReference type="SMR" id="Q9M9R4"/>
<dbReference type="PaxDb" id="3702-AT1G14490.1"/>
<dbReference type="EnsemblPlants" id="AT1G14490.1">
    <property type="protein sequence ID" value="AT1G14490.1"/>
    <property type="gene ID" value="AT1G14490"/>
</dbReference>
<dbReference type="GeneID" id="838011"/>
<dbReference type="Gramene" id="AT1G14490.1">
    <property type="protein sequence ID" value="AT1G14490.1"/>
    <property type="gene ID" value="AT1G14490"/>
</dbReference>
<dbReference type="KEGG" id="ath:AT1G14490"/>
<dbReference type="Araport" id="AT1G14490"/>
<dbReference type="TAIR" id="AT1G14490">
    <property type="gene designation" value="AHL28"/>
</dbReference>
<dbReference type="eggNOG" id="ENOG502QUN4">
    <property type="taxonomic scope" value="Eukaryota"/>
</dbReference>
<dbReference type="HOGENOM" id="CLU_039808_5_1_1"/>
<dbReference type="InParanoid" id="Q9M9R4"/>
<dbReference type="OMA" id="PPAVPIY"/>
<dbReference type="OrthoDB" id="782346at2759"/>
<dbReference type="PhylomeDB" id="Q9M9R4"/>
<dbReference type="PRO" id="PR:Q9M9R4"/>
<dbReference type="Proteomes" id="UP000006548">
    <property type="component" value="Chromosome 1"/>
</dbReference>
<dbReference type="ExpressionAtlas" id="Q9M9R4">
    <property type="expression patterns" value="baseline and differential"/>
</dbReference>
<dbReference type="GO" id="GO:0005634">
    <property type="term" value="C:nucleus"/>
    <property type="evidence" value="ECO:0007669"/>
    <property type="project" value="UniProtKB-SubCell"/>
</dbReference>
<dbReference type="GO" id="GO:0003680">
    <property type="term" value="F:minor groove of adenine-thymine-rich DNA binding"/>
    <property type="evidence" value="ECO:0007669"/>
    <property type="project" value="InterPro"/>
</dbReference>
<dbReference type="CDD" id="cd11378">
    <property type="entry name" value="DUF296"/>
    <property type="match status" value="1"/>
</dbReference>
<dbReference type="FunFam" id="3.30.1330.80:FF:000006">
    <property type="entry name" value="AT-hook motif nuclear-localized protein"/>
    <property type="match status" value="1"/>
</dbReference>
<dbReference type="Gene3D" id="3.30.1330.80">
    <property type="entry name" value="Hypothetical protein, similar to alpha- acetolactate decarboxylase, domain 2"/>
    <property type="match status" value="1"/>
</dbReference>
<dbReference type="InterPro" id="IPR014476">
    <property type="entry name" value="AHL15-29"/>
</dbReference>
<dbReference type="InterPro" id="IPR005175">
    <property type="entry name" value="PPC_dom"/>
</dbReference>
<dbReference type="PANTHER" id="PTHR31100">
    <property type="entry name" value="AT-HOOK MOTIF NUCLEAR-LOCALIZED PROTEIN 15"/>
    <property type="match status" value="1"/>
</dbReference>
<dbReference type="PANTHER" id="PTHR31100:SF69">
    <property type="entry name" value="AT-HOOK MOTIF NUCLEAR-LOCALIZED PROTEIN 17-RELATED"/>
    <property type="match status" value="1"/>
</dbReference>
<dbReference type="Pfam" id="PF03479">
    <property type="entry name" value="PCC"/>
    <property type="match status" value="1"/>
</dbReference>
<dbReference type="PIRSF" id="PIRSF016021">
    <property type="entry name" value="ESCAROLA"/>
    <property type="match status" value="1"/>
</dbReference>
<dbReference type="SUPFAM" id="SSF117856">
    <property type="entry name" value="AF0104/ALDC/Ptd012-like"/>
    <property type="match status" value="1"/>
</dbReference>
<dbReference type="PROSITE" id="PS51742">
    <property type="entry name" value="PPC"/>
    <property type="match status" value="1"/>
</dbReference>
<gene>
    <name evidence="5" type="primary">AHL28</name>
    <name evidence="7" type="ordered locus">At1g14490</name>
    <name evidence="8" type="ORF">F14L17.27</name>
</gene>
<name>AHL28_ARATH</name>
<organism>
    <name type="scientific">Arabidopsis thaliana</name>
    <name type="common">Mouse-ear cress</name>
    <dbReference type="NCBI Taxonomy" id="3702"/>
    <lineage>
        <taxon>Eukaryota</taxon>
        <taxon>Viridiplantae</taxon>
        <taxon>Streptophyta</taxon>
        <taxon>Embryophyta</taxon>
        <taxon>Tracheophyta</taxon>
        <taxon>Spermatophyta</taxon>
        <taxon>Magnoliopsida</taxon>
        <taxon>eudicotyledons</taxon>
        <taxon>Gunneridae</taxon>
        <taxon>Pentapetalae</taxon>
        <taxon>rosids</taxon>
        <taxon>malvids</taxon>
        <taxon>Brassicales</taxon>
        <taxon>Brassicaceae</taxon>
        <taxon>Camelineae</taxon>
        <taxon>Arabidopsis</taxon>
    </lineage>
</organism>
<reference key="1">
    <citation type="journal article" date="2000" name="Nature">
        <title>Sequence and analysis of chromosome 1 of the plant Arabidopsis thaliana.</title>
        <authorList>
            <person name="Theologis A."/>
            <person name="Ecker J.R."/>
            <person name="Palm C.J."/>
            <person name="Federspiel N.A."/>
            <person name="Kaul S."/>
            <person name="White O."/>
            <person name="Alonso J."/>
            <person name="Altafi H."/>
            <person name="Araujo R."/>
            <person name="Bowman C.L."/>
            <person name="Brooks S.Y."/>
            <person name="Buehler E."/>
            <person name="Chan A."/>
            <person name="Chao Q."/>
            <person name="Chen H."/>
            <person name="Cheuk R.F."/>
            <person name="Chin C.W."/>
            <person name="Chung M.K."/>
            <person name="Conn L."/>
            <person name="Conway A.B."/>
            <person name="Conway A.R."/>
            <person name="Creasy T.H."/>
            <person name="Dewar K."/>
            <person name="Dunn P."/>
            <person name="Etgu P."/>
            <person name="Feldblyum T.V."/>
            <person name="Feng J.-D."/>
            <person name="Fong B."/>
            <person name="Fujii C.Y."/>
            <person name="Gill J.E."/>
            <person name="Goldsmith A.D."/>
            <person name="Haas B."/>
            <person name="Hansen N.F."/>
            <person name="Hughes B."/>
            <person name="Huizar L."/>
            <person name="Hunter J.L."/>
            <person name="Jenkins J."/>
            <person name="Johnson-Hopson C."/>
            <person name="Khan S."/>
            <person name="Khaykin E."/>
            <person name="Kim C.J."/>
            <person name="Koo H.L."/>
            <person name="Kremenetskaia I."/>
            <person name="Kurtz D.B."/>
            <person name="Kwan A."/>
            <person name="Lam B."/>
            <person name="Langin-Hooper S."/>
            <person name="Lee A."/>
            <person name="Lee J.M."/>
            <person name="Lenz C.A."/>
            <person name="Li J.H."/>
            <person name="Li Y.-P."/>
            <person name="Lin X."/>
            <person name="Liu S.X."/>
            <person name="Liu Z.A."/>
            <person name="Luros J.S."/>
            <person name="Maiti R."/>
            <person name="Marziali A."/>
            <person name="Militscher J."/>
            <person name="Miranda M."/>
            <person name="Nguyen M."/>
            <person name="Nierman W.C."/>
            <person name="Osborne B.I."/>
            <person name="Pai G."/>
            <person name="Peterson J."/>
            <person name="Pham P.K."/>
            <person name="Rizzo M."/>
            <person name="Rooney T."/>
            <person name="Rowley D."/>
            <person name="Sakano H."/>
            <person name="Salzberg S.L."/>
            <person name="Schwartz J.R."/>
            <person name="Shinn P."/>
            <person name="Southwick A.M."/>
            <person name="Sun H."/>
            <person name="Tallon L.J."/>
            <person name="Tambunga G."/>
            <person name="Toriumi M.J."/>
            <person name="Town C.D."/>
            <person name="Utterback T."/>
            <person name="Van Aken S."/>
            <person name="Vaysberg M."/>
            <person name="Vysotskaia V.S."/>
            <person name="Walker M."/>
            <person name="Wu D."/>
            <person name="Yu G."/>
            <person name="Fraser C.M."/>
            <person name="Venter J.C."/>
            <person name="Davis R.W."/>
        </authorList>
    </citation>
    <scope>NUCLEOTIDE SEQUENCE [LARGE SCALE GENOMIC DNA]</scope>
    <source>
        <strain>cv. Columbia</strain>
    </source>
</reference>
<reference key="2">
    <citation type="journal article" date="2017" name="Plant J.">
        <title>Araport11: a complete reannotation of the Arabidopsis thaliana reference genome.</title>
        <authorList>
            <person name="Cheng C.Y."/>
            <person name="Krishnakumar V."/>
            <person name="Chan A.P."/>
            <person name="Thibaud-Nissen F."/>
            <person name="Schobel S."/>
            <person name="Town C.D."/>
        </authorList>
    </citation>
    <scope>GENOME REANNOTATION</scope>
    <source>
        <strain>cv. Columbia</strain>
    </source>
</reference>
<reference key="3">
    <citation type="submission" date="2006-12" db="EMBL/GenBank/DDBJ databases">
        <title>Arabidopsis ORF clones.</title>
        <authorList>
            <person name="Bautista V.R."/>
            <person name="Kim C.J."/>
            <person name="Chen H."/>
            <person name="Quinitio C."/>
            <person name="Ecker J.R."/>
        </authorList>
    </citation>
    <scope>NUCLEOTIDE SEQUENCE [LARGE SCALE MRNA]</scope>
    <source>
        <strain>cv. Columbia</strain>
    </source>
</reference>
<reference key="4">
    <citation type="submission" date="2009-03" db="EMBL/GenBank/DDBJ databases">
        <title>ORF cloning and analysis of Arabidopsis transcription factor genes.</title>
        <authorList>
            <person name="Fujita M."/>
            <person name="Mizukado S."/>
            <person name="Seki M."/>
            <person name="Shinozaki K."/>
            <person name="Mitsuda N."/>
            <person name="Takiguchi Y."/>
            <person name="Takagi M."/>
        </authorList>
    </citation>
    <scope>NUCLEOTIDE SEQUENCE [LARGE SCALE GENOMIC DNA]</scope>
</reference>
<reference key="5">
    <citation type="journal article" date="2004" name="Plant Mol. Biol.">
        <title>Identification of a novel plant MAR DNA binding protein localized on chromosomal surfaces.</title>
        <authorList>
            <person name="Fujimoto S."/>
            <person name="Matsunaga S."/>
            <person name="Yonemura M."/>
            <person name="Uchiyama S."/>
            <person name="Azuma T."/>
            <person name="Fukui K."/>
        </authorList>
    </citation>
    <scope>IDENTIFICATION</scope>
    <scope>GENE FAMILY</scope>
    <scope>NOMENCLATURE</scope>
    <source>
        <strain>cv. Columbia</strain>
    </source>
</reference>
<reference key="6">
    <citation type="journal article" date="2013" name="Proc. Natl. Acad. Sci. U.S.A.">
        <title>Arabidopsis thaliana AHL family modulates hypocotyl growth redundantly by interacting with each other via the PPC/DUF296 domain.</title>
        <authorList>
            <person name="Zhao J."/>
            <person name="Favero D.S."/>
            <person name="Peng H."/>
            <person name="Neff M.M."/>
        </authorList>
    </citation>
    <scope>GENE FAMILY</scope>
    <scope>DOMAIN PPC</scope>
</reference>
<feature type="chain" id="PRO_0000432045" description="AT-hook motif nuclear-localized protein 28">
    <location>
        <begin position="1"/>
        <end position="206"/>
    </location>
</feature>
<feature type="domain" description="PPC" evidence="2">
    <location>
        <begin position="27"/>
        <end position="173"/>
    </location>
</feature>
<feature type="DNA-binding region" description="A.T hook" evidence="6">
    <location>
        <begin position="5"/>
        <end position="17"/>
    </location>
</feature>
<feature type="region of interest" description="Disordered" evidence="3">
    <location>
        <begin position="1"/>
        <end position="21"/>
    </location>
</feature>
<feature type="region of interest" description="Disordered" evidence="3">
    <location>
        <begin position="160"/>
        <end position="206"/>
    </location>
</feature>
<feature type="compositionally biased region" description="Basic residues" evidence="3">
    <location>
        <begin position="7"/>
        <end position="18"/>
    </location>
</feature>
<protein>
    <recommendedName>
        <fullName evidence="9">AT-hook motif nuclear-localized protein 28</fullName>
    </recommendedName>
</protein>
<comment type="function">
    <text evidence="1">Transcription factor that specifically binds AT-rich DNA sequences related to the nuclear matrix attachment regions (MARs).</text>
</comment>
<comment type="subcellular location">
    <subcellularLocation>
        <location evidence="1">Nucleus</location>
    </subcellularLocation>
</comment>
<comment type="domain">
    <text evidence="4">The PPC domain mediates interactions between AHL proteins.</text>
</comment>
<keyword id="KW-0238">DNA-binding</keyword>
<keyword id="KW-0539">Nucleus</keyword>
<keyword id="KW-1185">Reference proteome</keyword>
<keyword id="KW-0804">Transcription</keyword>
<keyword id="KW-0805">Transcription regulation</keyword>
<accession>Q9M9R4</accession>
<proteinExistence type="evidence at transcript level"/>